<proteinExistence type="inferred from homology"/>
<keyword id="KW-0223">Dioxygenase</keyword>
<keyword id="KW-0408">Iron</keyword>
<keyword id="KW-0479">Metal-binding</keyword>
<keyword id="KW-0560">Oxidoreductase</keyword>
<keyword id="KW-0847">Vitamin C</keyword>
<accession>Q1BPK4</accession>
<feature type="chain" id="PRO_1000061710" description="PKHD-type hydroxylase Bcen_3557">
    <location>
        <begin position="1"/>
        <end position="227"/>
    </location>
</feature>
<feature type="domain" description="Fe2OG dioxygenase" evidence="1">
    <location>
        <begin position="78"/>
        <end position="178"/>
    </location>
</feature>
<feature type="binding site" evidence="1">
    <location>
        <position position="96"/>
    </location>
    <ligand>
        <name>Fe cation</name>
        <dbReference type="ChEBI" id="CHEBI:24875"/>
    </ligand>
</feature>
<feature type="binding site" evidence="1">
    <location>
        <position position="98"/>
    </location>
    <ligand>
        <name>Fe cation</name>
        <dbReference type="ChEBI" id="CHEBI:24875"/>
    </ligand>
</feature>
<feature type="binding site" evidence="1">
    <location>
        <position position="159"/>
    </location>
    <ligand>
        <name>Fe cation</name>
        <dbReference type="ChEBI" id="CHEBI:24875"/>
    </ligand>
</feature>
<feature type="binding site" evidence="1">
    <location>
        <position position="169"/>
    </location>
    <ligand>
        <name>2-oxoglutarate</name>
        <dbReference type="ChEBI" id="CHEBI:16810"/>
    </ligand>
</feature>
<name>Y3557_BURO1</name>
<sequence length="227" mass="24943">MMLHIPGVLTKAQVAQCREMLDTADWVDGNATSGAQSALAKRNRQLPEGSPVARTVGDAIQDALARHPLFFSAALPLKVFPPLFNRYEGGETFGTHVDNAIRLLRGTDFRVRSDLSATLFLEEPDAYDGGELCVEDTYGVHRAKLPAGDLVLYPASSLHHVTPVTRGERVASFFWIQSMVRDDGDRTLLFQLDTQIQALSAEKGAKDPVVISLTGIYHNLLRKWADA</sequence>
<gene>
    <name type="ordered locus">Bcen_3557</name>
</gene>
<protein>
    <recommendedName>
        <fullName evidence="1">PKHD-type hydroxylase Bcen_3557</fullName>
        <ecNumber evidence="1">1.14.11.-</ecNumber>
    </recommendedName>
</protein>
<dbReference type="EC" id="1.14.11.-" evidence="1"/>
<dbReference type="EMBL" id="CP000379">
    <property type="protein sequence ID" value="ABF78451.1"/>
    <property type="molecule type" value="Genomic_DNA"/>
</dbReference>
<dbReference type="SMR" id="Q1BPK4"/>
<dbReference type="HOGENOM" id="CLU_106663_0_0_4"/>
<dbReference type="GO" id="GO:0016706">
    <property type="term" value="F:2-oxoglutarate-dependent dioxygenase activity"/>
    <property type="evidence" value="ECO:0007669"/>
    <property type="project" value="UniProtKB-UniRule"/>
</dbReference>
<dbReference type="GO" id="GO:0005506">
    <property type="term" value="F:iron ion binding"/>
    <property type="evidence" value="ECO:0007669"/>
    <property type="project" value="UniProtKB-UniRule"/>
</dbReference>
<dbReference type="GO" id="GO:0031418">
    <property type="term" value="F:L-ascorbic acid binding"/>
    <property type="evidence" value="ECO:0007669"/>
    <property type="project" value="UniProtKB-KW"/>
</dbReference>
<dbReference type="GO" id="GO:0006974">
    <property type="term" value="P:DNA damage response"/>
    <property type="evidence" value="ECO:0007669"/>
    <property type="project" value="TreeGrafter"/>
</dbReference>
<dbReference type="GO" id="GO:0006879">
    <property type="term" value="P:intracellular iron ion homeostasis"/>
    <property type="evidence" value="ECO:0007669"/>
    <property type="project" value="TreeGrafter"/>
</dbReference>
<dbReference type="Gene3D" id="2.60.120.620">
    <property type="entry name" value="q2cbj1_9rhob like domain"/>
    <property type="match status" value="1"/>
</dbReference>
<dbReference type="Gene3D" id="4.10.860.20">
    <property type="entry name" value="Rabenosyn, Rab binding domain"/>
    <property type="match status" value="1"/>
</dbReference>
<dbReference type="HAMAP" id="MF_00657">
    <property type="entry name" value="Hydroxyl_YbiX"/>
    <property type="match status" value="1"/>
</dbReference>
<dbReference type="InterPro" id="IPR005123">
    <property type="entry name" value="Oxoglu/Fe-dep_dioxygenase_dom"/>
</dbReference>
<dbReference type="InterPro" id="IPR041097">
    <property type="entry name" value="PKHD_C"/>
</dbReference>
<dbReference type="InterPro" id="IPR023550">
    <property type="entry name" value="PKHD_hydroxylase"/>
</dbReference>
<dbReference type="InterPro" id="IPR006620">
    <property type="entry name" value="Pro_4_hyd_alph"/>
</dbReference>
<dbReference type="InterPro" id="IPR044862">
    <property type="entry name" value="Pro_4_hyd_alph_FE2OG_OXY"/>
</dbReference>
<dbReference type="NCBIfam" id="NF003973">
    <property type="entry name" value="PRK05467.1-2"/>
    <property type="match status" value="1"/>
</dbReference>
<dbReference type="NCBIfam" id="NF003974">
    <property type="entry name" value="PRK05467.1-3"/>
    <property type="match status" value="1"/>
</dbReference>
<dbReference type="NCBIfam" id="NF003975">
    <property type="entry name" value="PRK05467.1-4"/>
    <property type="match status" value="1"/>
</dbReference>
<dbReference type="PANTHER" id="PTHR41536">
    <property type="entry name" value="PKHD-TYPE HYDROXYLASE YBIX"/>
    <property type="match status" value="1"/>
</dbReference>
<dbReference type="PANTHER" id="PTHR41536:SF1">
    <property type="entry name" value="PKHD-TYPE HYDROXYLASE YBIX"/>
    <property type="match status" value="1"/>
</dbReference>
<dbReference type="Pfam" id="PF13640">
    <property type="entry name" value="2OG-FeII_Oxy_3"/>
    <property type="match status" value="1"/>
</dbReference>
<dbReference type="Pfam" id="PF18331">
    <property type="entry name" value="PKHD_C"/>
    <property type="match status" value="1"/>
</dbReference>
<dbReference type="SMART" id="SM00702">
    <property type="entry name" value="P4Hc"/>
    <property type="match status" value="1"/>
</dbReference>
<dbReference type="PROSITE" id="PS51471">
    <property type="entry name" value="FE2OG_OXY"/>
    <property type="match status" value="1"/>
</dbReference>
<reference key="1">
    <citation type="submission" date="2006-05" db="EMBL/GenBank/DDBJ databases">
        <title>Complete sequence of chromosome 2 of Burkholderia cenocepacia AU 1054.</title>
        <authorList>
            <consortium name="US DOE Joint Genome Institute"/>
            <person name="Copeland A."/>
            <person name="Lucas S."/>
            <person name="Lapidus A."/>
            <person name="Barry K."/>
            <person name="Detter J.C."/>
            <person name="Glavina del Rio T."/>
            <person name="Hammon N."/>
            <person name="Israni S."/>
            <person name="Dalin E."/>
            <person name="Tice H."/>
            <person name="Pitluck S."/>
            <person name="Chain P."/>
            <person name="Malfatti S."/>
            <person name="Shin M."/>
            <person name="Vergez L."/>
            <person name="Schmutz J."/>
            <person name="Larimer F."/>
            <person name="Land M."/>
            <person name="Hauser L."/>
            <person name="Kyrpides N."/>
            <person name="Lykidis A."/>
            <person name="LiPuma J.J."/>
            <person name="Konstantinidis K."/>
            <person name="Tiedje J.M."/>
            <person name="Richardson P."/>
        </authorList>
    </citation>
    <scope>NUCLEOTIDE SEQUENCE [LARGE SCALE GENOMIC DNA]</scope>
    <source>
        <strain>AU 1054</strain>
    </source>
</reference>
<evidence type="ECO:0000255" key="1">
    <source>
        <dbReference type="HAMAP-Rule" id="MF_00657"/>
    </source>
</evidence>
<organism>
    <name type="scientific">Burkholderia orbicola (strain AU 1054)</name>
    <dbReference type="NCBI Taxonomy" id="331271"/>
    <lineage>
        <taxon>Bacteria</taxon>
        <taxon>Pseudomonadati</taxon>
        <taxon>Pseudomonadota</taxon>
        <taxon>Betaproteobacteria</taxon>
        <taxon>Burkholderiales</taxon>
        <taxon>Burkholderiaceae</taxon>
        <taxon>Burkholderia</taxon>
        <taxon>Burkholderia cepacia complex</taxon>
        <taxon>Burkholderia orbicola</taxon>
    </lineage>
</organism>
<comment type="cofactor">
    <cofactor evidence="1">
        <name>Fe(2+)</name>
        <dbReference type="ChEBI" id="CHEBI:29033"/>
    </cofactor>
    <text evidence="1">Binds 1 Fe(2+) ion per subunit.</text>
</comment>
<comment type="cofactor">
    <cofactor evidence="1">
        <name>L-ascorbate</name>
        <dbReference type="ChEBI" id="CHEBI:38290"/>
    </cofactor>
</comment>